<gene>
    <name evidence="1" type="primary">mutL</name>
    <name type="ordered locus">Arad_1095</name>
</gene>
<feature type="chain" id="PRO_1000192150" description="DNA mismatch repair protein MutL">
    <location>
        <begin position="1"/>
        <end position="606"/>
    </location>
</feature>
<feature type="region of interest" description="Disordered" evidence="2">
    <location>
        <begin position="350"/>
        <end position="371"/>
    </location>
</feature>
<proteinExistence type="inferred from homology"/>
<keyword id="KW-0227">DNA damage</keyword>
<keyword id="KW-0234">DNA repair</keyword>
<reference key="1">
    <citation type="journal article" date="2009" name="J. Bacteriol.">
        <title>Genome sequences of three Agrobacterium biovars help elucidate the evolution of multichromosome genomes in bacteria.</title>
        <authorList>
            <person name="Slater S.C."/>
            <person name="Goldman B.S."/>
            <person name="Goodner B."/>
            <person name="Setubal J.C."/>
            <person name="Farrand S.K."/>
            <person name="Nester E.W."/>
            <person name="Burr T.J."/>
            <person name="Banta L."/>
            <person name="Dickerman A.W."/>
            <person name="Paulsen I."/>
            <person name="Otten L."/>
            <person name="Suen G."/>
            <person name="Welch R."/>
            <person name="Almeida N.F."/>
            <person name="Arnold F."/>
            <person name="Burton O.T."/>
            <person name="Du Z."/>
            <person name="Ewing A."/>
            <person name="Godsy E."/>
            <person name="Heisel S."/>
            <person name="Houmiel K.L."/>
            <person name="Jhaveri J."/>
            <person name="Lu J."/>
            <person name="Miller N.M."/>
            <person name="Norton S."/>
            <person name="Chen Q."/>
            <person name="Phoolcharoen W."/>
            <person name="Ohlin V."/>
            <person name="Ondrusek D."/>
            <person name="Pride N."/>
            <person name="Stricklin S.L."/>
            <person name="Sun J."/>
            <person name="Wheeler C."/>
            <person name="Wilson L."/>
            <person name="Zhu H."/>
            <person name="Wood D.W."/>
        </authorList>
    </citation>
    <scope>NUCLEOTIDE SEQUENCE [LARGE SCALE GENOMIC DNA]</scope>
    <source>
        <strain>K84 / ATCC BAA-868</strain>
    </source>
</reference>
<evidence type="ECO:0000255" key="1">
    <source>
        <dbReference type="HAMAP-Rule" id="MF_00149"/>
    </source>
</evidence>
<evidence type="ECO:0000256" key="2">
    <source>
        <dbReference type="SAM" id="MobiDB-lite"/>
    </source>
</evidence>
<organism>
    <name type="scientific">Rhizobium rhizogenes (strain K84 / ATCC BAA-868)</name>
    <name type="common">Agrobacterium radiobacter</name>
    <dbReference type="NCBI Taxonomy" id="311403"/>
    <lineage>
        <taxon>Bacteria</taxon>
        <taxon>Pseudomonadati</taxon>
        <taxon>Pseudomonadota</taxon>
        <taxon>Alphaproteobacteria</taxon>
        <taxon>Hyphomicrobiales</taxon>
        <taxon>Rhizobiaceae</taxon>
        <taxon>Rhizobium/Agrobacterium group</taxon>
        <taxon>Rhizobium</taxon>
    </lineage>
</organism>
<accession>B9JA11</accession>
<protein>
    <recommendedName>
        <fullName evidence="1">DNA mismatch repair protein MutL</fullName>
    </recommendedName>
</protein>
<sequence>MTIKQLSETLINQIAAGEVIERPASAAKELIENALDAGATRIEIATAGGGKALLRVSDNGSGMEQADLELAIKRHCTSKISDTLDDIRTLGFRGEALPSIGSVARLSIASRRVGSAGGAEIAVAGGKVLHLRPAAANPGTIVEVRDLFFATPARLKFLKTEKAEAAAITEVVKRMAIAFPQVRFVLSGSDRSTLEFPATGDDRLARMAQVLGKDFKDNAIELDAEREDVRLTGFAGVPTFNRGNSAHQYAFVNGRPVQDKLILSAIRGAYAETIPSGRYPIAVLSITLDPALLDVNVHPAKSDVRFRDPGLVRGLIVGAIREALAREGDRAATTGADGMLRAFTSGFQPGWRPSAPSAPWTPEASPSRPYQPAVTNGYSFRERPQAAFDGLTMPTARAESTPFVEPTQSEEPARFPLGAARAQLHENYIVAQTDDGLVIVDQHAAHERLVFEEMRKALHSKRLSSQVLLIPEIVDLPEEDCDRLMVFADELGELGLAIERFGPGAIAVRETPAMLGEVDAQGLIRQLADEIAEWDTASGLAAKLEYVAATMACHGSVRSGRRLRPEEMNALLRQMEATPGSGQCNHGRPTYIELKLSDIERLFGRS</sequence>
<name>MUTL_RHIR8</name>
<dbReference type="EMBL" id="CP000628">
    <property type="protein sequence ID" value="ACM25629.1"/>
    <property type="molecule type" value="Genomic_DNA"/>
</dbReference>
<dbReference type="RefSeq" id="WP_012651019.1">
    <property type="nucleotide sequence ID" value="NC_011985.1"/>
</dbReference>
<dbReference type="SMR" id="B9JA11"/>
<dbReference type="STRING" id="311403.Arad_1095"/>
<dbReference type="KEGG" id="ara:Arad_1095"/>
<dbReference type="eggNOG" id="COG0323">
    <property type="taxonomic scope" value="Bacteria"/>
</dbReference>
<dbReference type="HOGENOM" id="CLU_004131_4_2_5"/>
<dbReference type="Proteomes" id="UP000001600">
    <property type="component" value="Chromosome 1"/>
</dbReference>
<dbReference type="GO" id="GO:0032300">
    <property type="term" value="C:mismatch repair complex"/>
    <property type="evidence" value="ECO:0007669"/>
    <property type="project" value="InterPro"/>
</dbReference>
<dbReference type="GO" id="GO:0005524">
    <property type="term" value="F:ATP binding"/>
    <property type="evidence" value="ECO:0007669"/>
    <property type="project" value="InterPro"/>
</dbReference>
<dbReference type="GO" id="GO:0016887">
    <property type="term" value="F:ATP hydrolysis activity"/>
    <property type="evidence" value="ECO:0007669"/>
    <property type="project" value="InterPro"/>
</dbReference>
<dbReference type="GO" id="GO:0140664">
    <property type="term" value="F:ATP-dependent DNA damage sensor activity"/>
    <property type="evidence" value="ECO:0007669"/>
    <property type="project" value="InterPro"/>
</dbReference>
<dbReference type="GO" id="GO:0030983">
    <property type="term" value="F:mismatched DNA binding"/>
    <property type="evidence" value="ECO:0007669"/>
    <property type="project" value="InterPro"/>
</dbReference>
<dbReference type="GO" id="GO:0006298">
    <property type="term" value="P:mismatch repair"/>
    <property type="evidence" value="ECO:0007669"/>
    <property type="project" value="UniProtKB-UniRule"/>
</dbReference>
<dbReference type="CDD" id="cd16926">
    <property type="entry name" value="HATPase_MutL-MLH-PMS-like"/>
    <property type="match status" value="1"/>
</dbReference>
<dbReference type="CDD" id="cd00782">
    <property type="entry name" value="MutL_Trans"/>
    <property type="match status" value="1"/>
</dbReference>
<dbReference type="FunFam" id="3.30.565.10:FF:000003">
    <property type="entry name" value="DNA mismatch repair endonuclease MutL"/>
    <property type="match status" value="1"/>
</dbReference>
<dbReference type="Gene3D" id="3.30.230.10">
    <property type="match status" value="1"/>
</dbReference>
<dbReference type="Gene3D" id="3.30.565.10">
    <property type="entry name" value="Histidine kinase-like ATPase, C-terminal domain"/>
    <property type="match status" value="1"/>
</dbReference>
<dbReference type="Gene3D" id="3.30.1540.20">
    <property type="entry name" value="MutL, C-terminal domain, dimerisation subdomain"/>
    <property type="match status" value="1"/>
</dbReference>
<dbReference type="Gene3D" id="3.30.1370.100">
    <property type="entry name" value="MutL, C-terminal domain, regulatory subdomain"/>
    <property type="match status" value="1"/>
</dbReference>
<dbReference type="HAMAP" id="MF_00149">
    <property type="entry name" value="DNA_mis_repair"/>
    <property type="match status" value="1"/>
</dbReference>
<dbReference type="InterPro" id="IPR014762">
    <property type="entry name" value="DNA_mismatch_repair_CS"/>
</dbReference>
<dbReference type="InterPro" id="IPR020667">
    <property type="entry name" value="DNA_mismatch_repair_MutL"/>
</dbReference>
<dbReference type="InterPro" id="IPR013507">
    <property type="entry name" value="DNA_mismatch_S5_2-like"/>
</dbReference>
<dbReference type="InterPro" id="IPR036890">
    <property type="entry name" value="HATPase_C_sf"/>
</dbReference>
<dbReference type="InterPro" id="IPR002099">
    <property type="entry name" value="MutL/Mlh/PMS"/>
</dbReference>
<dbReference type="InterPro" id="IPR038973">
    <property type="entry name" value="MutL/Mlh/Pms-like"/>
</dbReference>
<dbReference type="InterPro" id="IPR014790">
    <property type="entry name" value="MutL_C"/>
</dbReference>
<dbReference type="InterPro" id="IPR042120">
    <property type="entry name" value="MutL_C_dimsub"/>
</dbReference>
<dbReference type="InterPro" id="IPR042121">
    <property type="entry name" value="MutL_C_regsub"/>
</dbReference>
<dbReference type="InterPro" id="IPR037198">
    <property type="entry name" value="MutL_C_sf"/>
</dbReference>
<dbReference type="InterPro" id="IPR020568">
    <property type="entry name" value="Ribosomal_Su5_D2-typ_SF"/>
</dbReference>
<dbReference type="InterPro" id="IPR014721">
    <property type="entry name" value="Ribsml_uS5_D2-typ_fold_subgr"/>
</dbReference>
<dbReference type="NCBIfam" id="TIGR00585">
    <property type="entry name" value="mutl"/>
    <property type="match status" value="1"/>
</dbReference>
<dbReference type="NCBIfam" id="NF000953">
    <property type="entry name" value="PRK00095.2-4"/>
    <property type="match status" value="1"/>
</dbReference>
<dbReference type="PANTHER" id="PTHR10073">
    <property type="entry name" value="DNA MISMATCH REPAIR PROTEIN MLH, PMS, MUTL"/>
    <property type="match status" value="1"/>
</dbReference>
<dbReference type="PANTHER" id="PTHR10073:SF12">
    <property type="entry name" value="DNA MISMATCH REPAIR PROTEIN MLH1"/>
    <property type="match status" value="1"/>
</dbReference>
<dbReference type="Pfam" id="PF01119">
    <property type="entry name" value="DNA_mis_repair"/>
    <property type="match status" value="1"/>
</dbReference>
<dbReference type="Pfam" id="PF13589">
    <property type="entry name" value="HATPase_c_3"/>
    <property type="match status" value="1"/>
</dbReference>
<dbReference type="Pfam" id="PF08676">
    <property type="entry name" value="MutL_C"/>
    <property type="match status" value="1"/>
</dbReference>
<dbReference type="SMART" id="SM01340">
    <property type="entry name" value="DNA_mis_repair"/>
    <property type="match status" value="1"/>
</dbReference>
<dbReference type="SMART" id="SM00853">
    <property type="entry name" value="MutL_C"/>
    <property type="match status" value="1"/>
</dbReference>
<dbReference type="SUPFAM" id="SSF55874">
    <property type="entry name" value="ATPase domain of HSP90 chaperone/DNA topoisomerase II/histidine kinase"/>
    <property type="match status" value="1"/>
</dbReference>
<dbReference type="SUPFAM" id="SSF118116">
    <property type="entry name" value="DNA mismatch repair protein MutL"/>
    <property type="match status" value="1"/>
</dbReference>
<dbReference type="SUPFAM" id="SSF54211">
    <property type="entry name" value="Ribosomal protein S5 domain 2-like"/>
    <property type="match status" value="1"/>
</dbReference>
<dbReference type="PROSITE" id="PS00058">
    <property type="entry name" value="DNA_MISMATCH_REPAIR_1"/>
    <property type="match status" value="1"/>
</dbReference>
<comment type="function">
    <text evidence="1">This protein is involved in the repair of mismatches in DNA. It is required for dam-dependent methyl-directed DNA mismatch repair. May act as a 'molecular matchmaker', a protein that promotes the formation of a stable complex between two or more DNA-binding proteins in an ATP-dependent manner without itself being part of a final effector complex.</text>
</comment>
<comment type="similarity">
    <text evidence="1">Belongs to the DNA mismatch repair MutL/HexB family.</text>
</comment>